<reference key="1">
    <citation type="journal article" date="2003" name="Virology">
        <title>Genetic diversity between human metapneumovirus subgroups.</title>
        <authorList>
            <person name="Biacchesi S."/>
            <person name="Skiadopoulos M.H."/>
            <person name="Boivin G."/>
            <person name="Hanson C.T."/>
            <person name="Murphy B.R."/>
            <person name="Collins P.L."/>
            <person name="Buchholz U.J."/>
        </authorList>
    </citation>
    <scope>NUCLEOTIDE SEQUENCE [GENOMIC RNA]</scope>
</reference>
<reference key="2">
    <citation type="journal article" date="2005" name="J. Virol.">
        <title>Chimeric recombinant human metapneumoviruses with the nucleoprotein or phosphoprotein open reading frame replaced by that of avian metapneumovirus exhibit improved growth in vitro and attenuation in vivo.</title>
        <authorList>
            <person name="Pham Q.N."/>
            <person name="Biacchesi S."/>
            <person name="Skiadopoulos M.H."/>
            <person name="Murphy B.R."/>
            <person name="Collins P.L."/>
            <person name="Buchholz U.J."/>
        </authorList>
    </citation>
    <scope>NUCLEOTIDE SEQUENCE [GENOMIC RNA]</scope>
</reference>
<reference key="3">
    <citation type="journal article" date="2017" name="J. Virol.">
        <title>Human Metapneumovirus Induces Formation of Inclusion Bodies for Efficient Genome Replication and Transcription.</title>
        <authorList>
            <person name="Cifuentes-Munoz N."/>
            <person name="Branttie J."/>
            <person name="Slaughter K.B."/>
            <person name="Dutch R.E."/>
        </authorList>
    </citation>
    <scope>SUBCELLULAR LOCATION</scope>
</reference>
<feature type="chain" id="PRO_0000394805" description="Nucleoprotein">
    <location>
        <begin position="1"/>
        <end position="394"/>
    </location>
</feature>
<feature type="helix" evidence="4">
    <location>
        <begin position="10"/>
        <end position="19"/>
    </location>
</feature>
<feature type="strand" evidence="4">
    <location>
        <begin position="32"/>
        <end position="35"/>
    </location>
</feature>
<feature type="helix" evidence="4">
    <location>
        <begin position="38"/>
        <end position="40"/>
    </location>
</feature>
<feature type="helix" evidence="4">
    <location>
        <begin position="41"/>
        <end position="50"/>
    </location>
</feature>
<feature type="helix" evidence="4">
    <location>
        <begin position="62"/>
        <end position="74"/>
    </location>
</feature>
<feature type="helix" evidence="4">
    <location>
        <begin position="76"/>
        <end position="85"/>
    </location>
</feature>
<feature type="strand" evidence="4">
    <location>
        <begin position="91"/>
        <end position="94"/>
    </location>
</feature>
<feature type="strand" evidence="4">
    <location>
        <begin position="96"/>
        <end position="104"/>
    </location>
</feature>
<feature type="strand" evidence="4">
    <location>
        <begin position="108"/>
        <end position="115"/>
    </location>
</feature>
<feature type="helix" evidence="4">
    <location>
        <begin position="121"/>
        <end position="141"/>
    </location>
</feature>
<feature type="strand" evidence="5">
    <location>
        <begin position="142"/>
        <end position="144"/>
    </location>
</feature>
<feature type="helix" evidence="4">
    <location>
        <begin position="148"/>
        <end position="150"/>
    </location>
</feature>
<feature type="helix" evidence="4">
    <location>
        <begin position="157"/>
        <end position="170"/>
    </location>
</feature>
<feature type="strand" evidence="4">
    <location>
        <begin position="172"/>
        <end position="174"/>
    </location>
</feature>
<feature type="helix" evidence="4">
    <location>
        <begin position="176"/>
        <end position="189"/>
    </location>
</feature>
<feature type="helix" evidence="4">
    <location>
        <begin position="192"/>
        <end position="197"/>
    </location>
</feature>
<feature type="helix" evidence="4">
    <location>
        <begin position="203"/>
        <end position="216"/>
    </location>
</feature>
<feature type="helix" evidence="4">
    <location>
        <begin position="219"/>
        <end position="232"/>
    </location>
</feature>
<feature type="helix" evidence="4">
    <location>
        <begin position="239"/>
        <end position="250"/>
    </location>
</feature>
<feature type="turn" evidence="4">
    <location>
        <begin position="251"/>
        <end position="255"/>
    </location>
</feature>
<feature type="helix" evidence="4">
    <location>
        <begin position="257"/>
        <end position="267"/>
    </location>
</feature>
<feature type="helix" evidence="4">
    <location>
        <begin position="271"/>
        <end position="274"/>
    </location>
</feature>
<feature type="helix" evidence="4">
    <location>
        <begin position="276"/>
        <end position="279"/>
    </location>
</feature>
<feature type="helix" evidence="4">
    <location>
        <begin position="282"/>
        <end position="295"/>
    </location>
</feature>
<feature type="helix" evidence="4">
    <location>
        <begin position="296"/>
        <end position="301"/>
    </location>
</feature>
<feature type="helix" evidence="4">
    <location>
        <begin position="302"/>
        <end position="305"/>
    </location>
</feature>
<feature type="turn" evidence="4">
    <location>
        <begin position="308"/>
        <end position="311"/>
    </location>
</feature>
<feature type="helix" evidence="4">
    <location>
        <begin position="319"/>
        <end position="331"/>
    </location>
</feature>
<feature type="turn" evidence="4">
    <location>
        <begin position="332"/>
        <end position="337"/>
    </location>
</feature>
<feature type="helix" evidence="4">
    <location>
        <begin position="345"/>
        <end position="360"/>
    </location>
</feature>
<name>NCAP_HMPVC</name>
<comment type="function">
    <text evidence="1">Encapsidates the viral RNA genome by forming a left-handed helical nucleocapsid that protects the RNA from nucleases. RNA replication depends on the availability of soluble nucleoprotein. The encapsidated genomic RNA is termed the NC and serves as template for transcription and replication.</text>
</comment>
<comment type="subunit">
    <text evidence="1">Homomultimerizes to form the nucleocapsid. Binds to viral genomic RNA. Interacts with the phosphoprotein P. When in a monomeric RNA-free form, interacts with the phosphoprotein (via N-terminus). Interacts with protein M2-1; this interaction allows the association of nucleocapsid with the matrix protein.</text>
</comment>
<comment type="subcellular location">
    <subcellularLocation>
        <location evidence="1">Virion</location>
    </subcellularLocation>
    <subcellularLocation>
        <location evidence="2">Host cytoplasm</location>
    </subcellularLocation>
    <text evidence="2">Localizes in cytoplasmic inclusion bodies.</text>
</comment>
<comment type="similarity">
    <text evidence="3">Belongs to the paramyxoviruses nucleocapsid family.</text>
</comment>
<sequence length="394" mass="43538">MSLQGIHLSDLSYKHAILKESQYTIKRDVGTTTAVTPSSLQQEITLLCGEILYAKHADYKYAAEIGIQYISTALGSERVQQILRNSGSEVQVVLTRTYSLGKVKNNKGEDLQMLDIHGVEKSWVEEIDKEARKTMATLLKESSGNIPQNQRPSAPDTPIILLCVGALIFTKLASTIEVGLETTVRRANRVLSDALKRYPRMDIPKIARSFYDLFEQKVYYRSLFIEYGKALGSSSTGSKAESLFVNIFMQAYGAGQTMLRWGVIARSSNNIMLGHVSVQAELKQVTEVYDLVREMGPESGLLHLRQSPKAGLLSLANCPNFASVVLGNASGLGIIGMYRGRVPNTELFSAAESYAKSLKESNKINFSSLGLTDEEKEAAEHFLNVSDDSQNDYE</sequence>
<evidence type="ECO:0000250" key="1">
    <source>
        <dbReference type="UniProtKB" id="P03418"/>
    </source>
</evidence>
<evidence type="ECO:0000269" key="2">
    <source>
    </source>
</evidence>
<evidence type="ECO:0000305" key="3"/>
<evidence type="ECO:0007829" key="4">
    <source>
        <dbReference type="PDB" id="8PDP"/>
    </source>
</evidence>
<evidence type="ECO:0007829" key="5">
    <source>
        <dbReference type="PDB" id="8PDS"/>
    </source>
</evidence>
<gene>
    <name type="primary">N</name>
</gene>
<proteinExistence type="evidence at protein level"/>
<protein>
    <recommendedName>
        <fullName>Nucleoprotein</fullName>
        <shortName>Protein N</shortName>
    </recommendedName>
    <alternativeName>
        <fullName>Nucleocapsid protein</fullName>
    </alternativeName>
</protein>
<organismHost>
    <name type="scientific">Homo sapiens</name>
    <name type="common">Human</name>
    <dbReference type="NCBI Taxonomy" id="9606"/>
</organismHost>
<keyword id="KW-0002">3D-structure</keyword>
<keyword id="KW-0167">Capsid protein</keyword>
<keyword id="KW-1139">Helical capsid protein</keyword>
<keyword id="KW-1035">Host cytoplasm</keyword>
<keyword id="KW-1185">Reference proteome</keyword>
<keyword id="KW-0687">Ribonucleoprotein</keyword>
<keyword id="KW-0694">RNA-binding</keyword>
<keyword id="KW-0543">Viral nucleoprotein</keyword>
<keyword id="KW-0946">Virion</keyword>
<dbReference type="EMBL" id="AY297749">
    <property type="protein sequence ID" value="AAQ67692.1"/>
    <property type="molecule type" value="Genomic_RNA"/>
</dbReference>
<dbReference type="RefSeq" id="YP_012605.1">
    <property type="nucleotide sequence ID" value="NC_004148.2"/>
</dbReference>
<dbReference type="PDB" id="8PDL">
    <property type="method" value="EM"/>
    <property type="resolution" value="3.10 A"/>
    <property type="chains" value="A=1-394"/>
</dbReference>
<dbReference type="PDB" id="8PDM">
    <property type="method" value="EM"/>
    <property type="resolution" value="3.30 A"/>
    <property type="chains" value="A=1-394"/>
</dbReference>
<dbReference type="PDB" id="8PDN">
    <property type="method" value="EM"/>
    <property type="resolution" value="4.70 A"/>
    <property type="chains" value="A/B/C/D/E/F/G/H/I/J/K/L=1-394"/>
</dbReference>
<dbReference type="PDB" id="8PDO">
    <property type="method" value="EM"/>
    <property type="resolution" value="3.10 A"/>
    <property type="chains" value="A/B=1-394"/>
</dbReference>
<dbReference type="PDB" id="8PDP">
    <property type="method" value="EM"/>
    <property type="resolution" value="2.90 A"/>
    <property type="chains" value="A=1-394"/>
</dbReference>
<dbReference type="PDB" id="8PDQ">
    <property type="method" value="EM"/>
    <property type="resolution" value="3.10 A"/>
    <property type="chains" value="A=1-394"/>
</dbReference>
<dbReference type="PDB" id="8PDR">
    <property type="method" value="EM"/>
    <property type="resolution" value="4.00 A"/>
    <property type="chains" value="A/B/C/D/E/F/G/H/I/J/K=1-394"/>
</dbReference>
<dbReference type="PDB" id="8PDS">
    <property type="method" value="EM"/>
    <property type="resolution" value="2.90 A"/>
    <property type="chains" value="A/C=1-394"/>
</dbReference>
<dbReference type="PDBsum" id="8PDL"/>
<dbReference type="PDBsum" id="8PDM"/>
<dbReference type="PDBsum" id="8PDN"/>
<dbReference type="PDBsum" id="8PDO"/>
<dbReference type="PDBsum" id="8PDP"/>
<dbReference type="PDBsum" id="8PDQ"/>
<dbReference type="PDBsum" id="8PDR"/>
<dbReference type="PDBsum" id="8PDS"/>
<dbReference type="EMDB" id="EMD-17613"/>
<dbReference type="EMDB" id="EMD-17614"/>
<dbReference type="EMDB" id="EMD-17615"/>
<dbReference type="EMDB" id="EMD-17616"/>
<dbReference type="EMDB" id="EMD-17617"/>
<dbReference type="EMDB" id="EMD-17618"/>
<dbReference type="EMDB" id="EMD-17619"/>
<dbReference type="EMDB" id="EMD-17620"/>
<dbReference type="SMR" id="Q6WBA1"/>
<dbReference type="Proteomes" id="UP000001398">
    <property type="component" value="Segment"/>
</dbReference>
<dbReference type="GO" id="GO:0019029">
    <property type="term" value="C:helical viral capsid"/>
    <property type="evidence" value="ECO:0007669"/>
    <property type="project" value="UniProtKB-KW"/>
</dbReference>
<dbReference type="GO" id="GO:0030430">
    <property type="term" value="C:host cell cytoplasm"/>
    <property type="evidence" value="ECO:0007669"/>
    <property type="project" value="UniProtKB-SubCell"/>
</dbReference>
<dbReference type="GO" id="GO:1990904">
    <property type="term" value="C:ribonucleoprotein complex"/>
    <property type="evidence" value="ECO:0007669"/>
    <property type="project" value="UniProtKB-KW"/>
</dbReference>
<dbReference type="GO" id="GO:0019013">
    <property type="term" value="C:viral nucleocapsid"/>
    <property type="evidence" value="ECO:0007669"/>
    <property type="project" value="UniProtKB-KW"/>
</dbReference>
<dbReference type="GO" id="GO:0003723">
    <property type="term" value="F:RNA binding"/>
    <property type="evidence" value="ECO:0007669"/>
    <property type="project" value="UniProtKB-KW"/>
</dbReference>
<dbReference type="InterPro" id="IPR004930">
    <property type="entry name" value="Pneumo_ncap"/>
</dbReference>
<dbReference type="Pfam" id="PF03246">
    <property type="entry name" value="Pneumo_ncap"/>
    <property type="match status" value="1"/>
</dbReference>
<organism>
    <name type="scientific">Human metapneumovirus (strain CAN97-83)</name>
    <name type="common">HMPV</name>
    <dbReference type="NCBI Taxonomy" id="694067"/>
    <lineage>
        <taxon>Viruses</taxon>
        <taxon>Riboviria</taxon>
        <taxon>Orthornavirae</taxon>
        <taxon>Negarnaviricota</taxon>
        <taxon>Haploviricotina</taxon>
        <taxon>Monjiviricetes</taxon>
        <taxon>Mononegavirales</taxon>
        <taxon>Pneumoviridae</taxon>
        <taxon>Metapneumovirus</taxon>
        <taxon>Metapneumovirus hominis</taxon>
    </lineage>
</organism>
<accession>Q6WBA1</accession>